<reference key="1">
    <citation type="journal article" date="2003" name="J. Bacteriol.">
        <title>Comparative analyses of the complete genome sequences of Pierce's disease and citrus variegated chlorosis strains of Xylella fastidiosa.</title>
        <authorList>
            <person name="Van Sluys M.A."/>
            <person name="de Oliveira M.C."/>
            <person name="Monteiro-Vitorello C.B."/>
            <person name="Miyaki C.Y."/>
            <person name="Furlan L.R."/>
            <person name="Camargo L.E.A."/>
            <person name="da Silva A.C.R."/>
            <person name="Moon D.H."/>
            <person name="Takita M.A."/>
            <person name="Lemos E.G.M."/>
            <person name="Machado M.A."/>
            <person name="Ferro M.I.T."/>
            <person name="da Silva F.R."/>
            <person name="Goldman M.H.S."/>
            <person name="Goldman G.H."/>
            <person name="Lemos M.V.F."/>
            <person name="El-Dorry H."/>
            <person name="Tsai S.M."/>
            <person name="Carrer H."/>
            <person name="Carraro D.M."/>
            <person name="de Oliveira R.C."/>
            <person name="Nunes L.R."/>
            <person name="Siqueira W.J."/>
            <person name="Coutinho L.L."/>
            <person name="Kimura E.T."/>
            <person name="Ferro E.S."/>
            <person name="Harakava R."/>
            <person name="Kuramae E.E."/>
            <person name="Marino C.L."/>
            <person name="Giglioti E."/>
            <person name="Abreu I.L."/>
            <person name="Alves L.M.C."/>
            <person name="do Amaral A.M."/>
            <person name="Baia G.S."/>
            <person name="Blanco S.R."/>
            <person name="Brito M.S."/>
            <person name="Cannavan F.S."/>
            <person name="Celestino A.V."/>
            <person name="da Cunha A.F."/>
            <person name="Fenille R.C."/>
            <person name="Ferro J.A."/>
            <person name="Formighieri E.F."/>
            <person name="Kishi L.T."/>
            <person name="Leoni S.G."/>
            <person name="Oliveira A.R."/>
            <person name="Rosa V.E. Jr."/>
            <person name="Sassaki F.T."/>
            <person name="Sena J.A.D."/>
            <person name="de Souza A.A."/>
            <person name="Truffi D."/>
            <person name="Tsukumo F."/>
            <person name="Yanai G.M."/>
            <person name="Zaros L.G."/>
            <person name="Civerolo E.L."/>
            <person name="Simpson A.J.G."/>
            <person name="Almeida N.F. Jr."/>
            <person name="Setubal J.C."/>
            <person name="Kitajima J.P."/>
        </authorList>
    </citation>
    <scope>NUCLEOTIDE SEQUENCE [LARGE SCALE GENOMIC DNA]</scope>
    <source>
        <strain>Temecula1 / ATCC 700964</strain>
    </source>
</reference>
<protein>
    <recommendedName>
        <fullName evidence="1">DNA mismatch repair protein MutS</fullName>
    </recommendedName>
</protein>
<accession>Q87CI8</accession>
<comment type="function">
    <text evidence="1">This protein is involved in the repair of mismatches in DNA. It is possible that it carries out the mismatch recognition step. This protein has a weak ATPase activity.</text>
</comment>
<comment type="similarity">
    <text evidence="1">Belongs to the DNA mismatch repair MutS family.</text>
</comment>
<proteinExistence type="inferred from homology"/>
<keyword id="KW-0067">ATP-binding</keyword>
<keyword id="KW-0227">DNA damage</keyword>
<keyword id="KW-0234">DNA repair</keyword>
<keyword id="KW-0238">DNA-binding</keyword>
<keyword id="KW-0547">Nucleotide-binding</keyword>
<keyword id="KW-1185">Reference proteome</keyword>
<evidence type="ECO:0000255" key="1">
    <source>
        <dbReference type="HAMAP-Rule" id="MF_00096"/>
    </source>
</evidence>
<feature type="chain" id="PRO_0000115172" description="DNA mismatch repair protein MutS">
    <location>
        <begin position="1"/>
        <end position="868"/>
    </location>
</feature>
<feature type="binding site" evidence="1">
    <location>
        <begin position="620"/>
        <end position="627"/>
    </location>
    <ligand>
        <name>ATP</name>
        <dbReference type="ChEBI" id="CHEBI:30616"/>
    </ligand>
</feature>
<sequence length="868" mass="96863">MREKPEGGKGMAEHTPLMKQYFAAKAEYPDLLLFFRMGDFYELFHQDARKAARLLDITLTQRGSSGGTPIPMAGVPVHAYEGYLARLIALGESVAICEQIGDPGLAKGLVERKVVRIVTPGTITEEALLEERRDTLLMALSRTKNCYGLAWADLAGGRFLVNEVDSEEALEAELARLEPAELLLPDEDAWPEYLQQRNGVRRRPPWLFDADSGRRKLLAFFKLHDLSGFGIENNPQATAAAGALLGYIEETQKQRLPHLTSITMETVGEAITMNAATRRHLELDTRVDGESRHTLLGVLDSTVTPMGGRLLRRWLHRPLRLREVVRQRHAAVGSMIDSDLDNKLRETFRRLGDMERILTRVALRSARPRDISTLRDSLSLLPRLRELLNASDSPRLRVLYAELGEHDSTASLLVKAVAEQPPLKLTDGGVIAPEYDVELDELRKLSNNADQFLIDLETRERESSGISTLKVGYNRVHGYYIEISKGQADKAPVHYTRRQTLTNAERYITEELKAFEDKVLSARDRALAREKLLYEQLLDTVGAQLEPLKRCAAALSELDVLVCFAERAQTLDWVRPELEHTSCLHIEGGRHPVVEAVREQRFEPNDLYLHPERRMLVITGPNMGGKSTYMRQNALIVLLAYIGSYVPASRALIGPIDRIMTRIGAGDDLARGQSTFMLEMTETSYILHHATAQSLVLMDEIGRGTSTYDGLALADAVARHLAHINRCYTLFATHYFELTALAEETYEGGLSGIANVHFDAVEHSERLVFMHTVKDGPANRSFGLQVAALAGLPAATVAQARRRLAELEQRGRESHVSEITQLELDAPQQCNLFASAPSAAQEALVALHPDELTPKQALEALYRLKALL</sequence>
<organism>
    <name type="scientific">Xylella fastidiosa (strain Temecula1 / ATCC 700964)</name>
    <dbReference type="NCBI Taxonomy" id="183190"/>
    <lineage>
        <taxon>Bacteria</taxon>
        <taxon>Pseudomonadati</taxon>
        <taxon>Pseudomonadota</taxon>
        <taxon>Gammaproteobacteria</taxon>
        <taxon>Lysobacterales</taxon>
        <taxon>Lysobacteraceae</taxon>
        <taxon>Xylella</taxon>
    </lineage>
</organism>
<dbReference type="EMBL" id="AE009442">
    <property type="protein sequence ID" value="AAO28937.1"/>
    <property type="molecule type" value="Genomic_DNA"/>
</dbReference>
<dbReference type="SMR" id="Q87CI8"/>
<dbReference type="KEGG" id="xft:PD_1081"/>
<dbReference type="HOGENOM" id="CLU_002472_4_0_6"/>
<dbReference type="Proteomes" id="UP000002516">
    <property type="component" value="Chromosome"/>
</dbReference>
<dbReference type="GO" id="GO:0005829">
    <property type="term" value="C:cytosol"/>
    <property type="evidence" value="ECO:0007669"/>
    <property type="project" value="TreeGrafter"/>
</dbReference>
<dbReference type="GO" id="GO:0005524">
    <property type="term" value="F:ATP binding"/>
    <property type="evidence" value="ECO:0007669"/>
    <property type="project" value="UniProtKB-UniRule"/>
</dbReference>
<dbReference type="GO" id="GO:0140664">
    <property type="term" value="F:ATP-dependent DNA damage sensor activity"/>
    <property type="evidence" value="ECO:0007669"/>
    <property type="project" value="InterPro"/>
</dbReference>
<dbReference type="GO" id="GO:0003684">
    <property type="term" value="F:damaged DNA binding"/>
    <property type="evidence" value="ECO:0007669"/>
    <property type="project" value="UniProtKB-UniRule"/>
</dbReference>
<dbReference type="GO" id="GO:0030983">
    <property type="term" value="F:mismatched DNA binding"/>
    <property type="evidence" value="ECO:0007669"/>
    <property type="project" value="InterPro"/>
</dbReference>
<dbReference type="GO" id="GO:0006298">
    <property type="term" value="P:mismatch repair"/>
    <property type="evidence" value="ECO:0007669"/>
    <property type="project" value="UniProtKB-UniRule"/>
</dbReference>
<dbReference type="FunFam" id="1.10.1420.10:FF:000002">
    <property type="entry name" value="DNA mismatch repair protein MutS"/>
    <property type="match status" value="1"/>
</dbReference>
<dbReference type="FunFam" id="3.40.1170.10:FF:000001">
    <property type="entry name" value="DNA mismatch repair protein MutS"/>
    <property type="match status" value="1"/>
</dbReference>
<dbReference type="FunFam" id="3.40.50.300:FF:000283">
    <property type="entry name" value="DNA mismatch repair protein MutS"/>
    <property type="match status" value="1"/>
</dbReference>
<dbReference type="Gene3D" id="1.10.1420.10">
    <property type="match status" value="2"/>
</dbReference>
<dbReference type="Gene3D" id="6.10.140.430">
    <property type="match status" value="1"/>
</dbReference>
<dbReference type="Gene3D" id="3.40.1170.10">
    <property type="entry name" value="DNA repair protein MutS, domain I"/>
    <property type="match status" value="1"/>
</dbReference>
<dbReference type="Gene3D" id="3.30.420.110">
    <property type="entry name" value="MutS, connector domain"/>
    <property type="match status" value="1"/>
</dbReference>
<dbReference type="Gene3D" id="3.40.50.300">
    <property type="entry name" value="P-loop containing nucleotide triphosphate hydrolases"/>
    <property type="match status" value="1"/>
</dbReference>
<dbReference type="HAMAP" id="MF_00096">
    <property type="entry name" value="MutS"/>
    <property type="match status" value="1"/>
</dbReference>
<dbReference type="InterPro" id="IPR005748">
    <property type="entry name" value="DNA_mismatch_repair_MutS"/>
</dbReference>
<dbReference type="InterPro" id="IPR007695">
    <property type="entry name" value="DNA_mismatch_repair_MutS-lik_N"/>
</dbReference>
<dbReference type="InterPro" id="IPR017261">
    <property type="entry name" value="DNA_mismatch_repair_MutS/MSH"/>
</dbReference>
<dbReference type="InterPro" id="IPR000432">
    <property type="entry name" value="DNA_mismatch_repair_MutS_C"/>
</dbReference>
<dbReference type="InterPro" id="IPR007861">
    <property type="entry name" value="DNA_mismatch_repair_MutS_clamp"/>
</dbReference>
<dbReference type="InterPro" id="IPR007696">
    <property type="entry name" value="DNA_mismatch_repair_MutS_core"/>
</dbReference>
<dbReference type="InterPro" id="IPR016151">
    <property type="entry name" value="DNA_mismatch_repair_MutS_N"/>
</dbReference>
<dbReference type="InterPro" id="IPR036187">
    <property type="entry name" value="DNA_mismatch_repair_MutS_sf"/>
</dbReference>
<dbReference type="InterPro" id="IPR007860">
    <property type="entry name" value="DNA_mmatch_repair_MutS_con_dom"/>
</dbReference>
<dbReference type="InterPro" id="IPR045076">
    <property type="entry name" value="MutS"/>
</dbReference>
<dbReference type="InterPro" id="IPR036678">
    <property type="entry name" value="MutS_con_dom_sf"/>
</dbReference>
<dbReference type="InterPro" id="IPR027417">
    <property type="entry name" value="P-loop_NTPase"/>
</dbReference>
<dbReference type="NCBIfam" id="TIGR01070">
    <property type="entry name" value="mutS1"/>
    <property type="match status" value="1"/>
</dbReference>
<dbReference type="NCBIfam" id="NF003810">
    <property type="entry name" value="PRK05399.1"/>
    <property type="match status" value="1"/>
</dbReference>
<dbReference type="PANTHER" id="PTHR11361:SF34">
    <property type="entry name" value="DNA MISMATCH REPAIR PROTEIN MSH1, MITOCHONDRIAL"/>
    <property type="match status" value="1"/>
</dbReference>
<dbReference type="PANTHER" id="PTHR11361">
    <property type="entry name" value="DNA MISMATCH REPAIR PROTEIN MUTS FAMILY MEMBER"/>
    <property type="match status" value="1"/>
</dbReference>
<dbReference type="Pfam" id="PF01624">
    <property type="entry name" value="MutS_I"/>
    <property type="match status" value="1"/>
</dbReference>
<dbReference type="Pfam" id="PF05188">
    <property type="entry name" value="MutS_II"/>
    <property type="match status" value="1"/>
</dbReference>
<dbReference type="Pfam" id="PF05192">
    <property type="entry name" value="MutS_III"/>
    <property type="match status" value="1"/>
</dbReference>
<dbReference type="Pfam" id="PF05190">
    <property type="entry name" value="MutS_IV"/>
    <property type="match status" value="1"/>
</dbReference>
<dbReference type="Pfam" id="PF00488">
    <property type="entry name" value="MutS_V"/>
    <property type="match status" value="1"/>
</dbReference>
<dbReference type="PIRSF" id="PIRSF037677">
    <property type="entry name" value="DNA_mis_repair_Msh6"/>
    <property type="match status" value="1"/>
</dbReference>
<dbReference type="SMART" id="SM00534">
    <property type="entry name" value="MUTSac"/>
    <property type="match status" value="1"/>
</dbReference>
<dbReference type="SMART" id="SM00533">
    <property type="entry name" value="MUTSd"/>
    <property type="match status" value="1"/>
</dbReference>
<dbReference type="SUPFAM" id="SSF55271">
    <property type="entry name" value="DNA repair protein MutS, domain I"/>
    <property type="match status" value="1"/>
</dbReference>
<dbReference type="SUPFAM" id="SSF53150">
    <property type="entry name" value="DNA repair protein MutS, domain II"/>
    <property type="match status" value="1"/>
</dbReference>
<dbReference type="SUPFAM" id="SSF48334">
    <property type="entry name" value="DNA repair protein MutS, domain III"/>
    <property type="match status" value="1"/>
</dbReference>
<dbReference type="SUPFAM" id="SSF52540">
    <property type="entry name" value="P-loop containing nucleoside triphosphate hydrolases"/>
    <property type="match status" value="1"/>
</dbReference>
<dbReference type="PROSITE" id="PS00486">
    <property type="entry name" value="DNA_MISMATCH_REPAIR_2"/>
    <property type="match status" value="1"/>
</dbReference>
<gene>
    <name evidence="1" type="primary">mutS</name>
    <name type="ordered locus">PD_1081</name>
</gene>
<name>MUTS_XYLFT</name>